<reference key="1">
    <citation type="journal article" date="2008" name="J. Bacteriol.">
        <title>Genome sequence of Lactobacillus helveticus: an organism distinguished by selective gene loss and IS element expansion.</title>
        <authorList>
            <person name="Callanan M."/>
            <person name="Kaleta P."/>
            <person name="O'Callaghan J."/>
            <person name="O'Sullivan O."/>
            <person name="Jordan K."/>
            <person name="McAuliffe O."/>
            <person name="Sangrador-Vegas A."/>
            <person name="Slattery L."/>
            <person name="Fitzgerald G.F."/>
            <person name="Beresford T."/>
            <person name="Ross R.P."/>
        </authorList>
    </citation>
    <scope>NUCLEOTIDE SEQUENCE [LARGE SCALE GENOMIC DNA]</scope>
    <source>
        <strain>DPC 4571</strain>
    </source>
</reference>
<gene>
    <name evidence="1" type="primary">pgi</name>
    <name type="ordered locus">lhv_0795</name>
</gene>
<name>G6PI_LACH4</name>
<dbReference type="EC" id="5.3.1.9" evidence="1"/>
<dbReference type="EMBL" id="CP000517">
    <property type="protein sequence ID" value="ABX26923.1"/>
    <property type="molecule type" value="Genomic_DNA"/>
</dbReference>
<dbReference type="RefSeq" id="WP_012211660.1">
    <property type="nucleotide sequence ID" value="NC_010080.1"/>
</dbReference>
<dbReference type="SMR" id="A8YUI5"/>
<dbReference type="KEGG" id="lhe:lhv_0795"/>
<dbReference type="eggNOG" id="COG0166">
    <property type="taxonomic scope" value="Bacteria"/>
</dbReference>
<dbReference type="HOGENOM" id="CLU_037303_0_1_9"/>
<dbReference type="UniPathway" id="UPA00109">
    <property type="reaction ID" value="UER00181"/>
</dbReference>
<dbReference type="UniPathway" id="UPA00138"/>
<dbReference type="Proteomes" id="UP000000790">
    <property type="component" value="Chromosome"/>
</dbReference>
<dbReference type="GO" id="GO:0005829">
    <property type="term" value="C:cytosol"/>
    <property type="evidence" value="ECO:0007669"/>
    <property type="project" value="TreeGrafter"/>
</dbReference>
<dbReference type="GO" id="GO:0097367">
    <property type="term" value="F:carbohydrate derivative binding"/>
    <property type="evidence" value="ECO:0007669"/>
    <property type="project" value="InterPro"/>
</dbReference>
<dbReference type="GO" id="GO:0004347">
    <property type="term" value="F:glucose-6-phosphate isomerase activity"/>
    <property type="evidence" value="ECO:0007669"/>
    <property type="project" value="UniProtKB-UniRule"/>
</dbReference>
<dbReference type="GO" id="GO:0048029">
    <property type="term" value="F:monosaccharide binding"/>
    <property type="evidence" value="ECO:0007669"/>
    <property type="project" value="TreeGrafter"/>
</dbReference>
<dbReference type="GO" id="GO:0006094">
    <property type="term" value="P:gluconeogenesis"/>
    <property type="evidence" value="ECO:0007669"/>
    <property type="project" value="UniProtKB-UniRule"/>
</dbReference>
<dbReference type="GO" id="GO:0051156">
    <property type="term" value="P:glucose 6-phosphate metabolic process"/>
    <property type="evidence" value="ECO:0007669"/>
    <property type="project" value="TreeGrafter"/>
</dbReference>
<dbReference type="GO" id="GO:0006096">
    <property type="term" value="P:glycolytic process"/>
    <property type="evidence" value="ECO:0007669"/>
    <property type="project" value="UniProtKB-UniRule"/>
</dbReference>
<dbReference type="CDD" id="cd05015">
    <property type="entry name" value="SIS_PGI_1"/>
    <property type="match status" value="1"/>
</dbReference>
<dbReference type="CDD" id="cd05016">
    <property type="entry name" value="SIS_PGI_2"/>
    <property type="match status" value="1"/>
</dbReference>
<dbReference type="FunFam" id="3.40.50.10490:FF:000015">
    <property type="entry name" value="Glucose-6-phosphate isomerase"/>
    <property type="match status" value="1"/>
</dbReference>
<dbReference type="FunFam" id="3.40.50.10490:FF:000016">
    <property type="entry name" value="Glucose-6-phosphate isomerase"/>
    <property type="match status" value="1"/>
</dbReference>
<dbReference type="Gene3D" id="3.40.50.10490">
    <property type="entry name" value="Glucose-6-phosphate isomerase like protein, domain 1"/>
    <property type="match status" value="2"/>
</dbReference>
<dbReference type="HAMAP" id="MF_00473">
    <property type="entry name" value="G6P_isomerase"/>
    <property type="match status" value="1"/>
</dbReference>
<dbReference type="InterPro" id="IPR001672">
    <property type="entry name" value="G6P_Isomerase"/>
</dbReference>
<dbReference type="InterPro" id="IPR018189">
    <property type="entry name" value="Phosphoglucose_isomerase_CS"/>
</dbReference>
<dbReference type="InterPro" id="IPR046348">
    <property type="entry name" value="SIS_dom_sf"/>
</dbReference>
<dbReference type="InterPro" id="IPR035476">
    <property type="entry name" value="SIS_PGI_1"/>
</dbReference>
<dbReference type="InterPro" id="IPR035482">
    <property type="entry name" value="SIS_PGI_2"/>
</dbReference>
<dbReference type="NCBIfam" id="NF010697">
    <property type="entry name" value="PRK14097.1"/>
    <property type="match status" value="1"/>
</dbReference>
<dbReference type="PANTHER" id="PTHR11469">
    <property type="entry name" value="GLUCOSE-6-PHOSPHATE ISOMERASE"/>
    <property type="match status" value="1"/>
</dbReference>
<dbReference type="PANTHER" id="PTHR11469:SF1">
    <property type="entry name" value="GLUCOSE-6-PHOSPHATE ISOMERASE"/>
    <property type="match status" value="1"/>
</dbReference>
<dbReference type="Pfam" id="PF00342">
    <property type="entry name" value="PGI"/>
    <property type="match status" value="1"/>
</dbReference>
<dbReference type="PRINTS" id="PR00662">
    <property type="entry name" value="G6PISOMERASE"/>
</dbReference>
<dbReference type="SUPFAM" id="SSF53697">
    <property type="entry name" value="SIS domain"/>
    <property type="match status" value="1"/>
</dbReference>
<dbReference type="PROSITE" id="PS00765">
    <property type="entry name" value="P_GLUCOSE_ISOMERASE_1"/>
    <property type="match status" value="1"/>
</dbReference>
<dbReference type="PROSITE" id="PS00174">
    <property type="entry name" value="P_GLUCOSE_ISOMERASE_2"/>
    <property type="match status" value="1"/>
</dbReference>
<dbReference type="PROSITE" id="PS51463">
    <property type="entry name" value="P_GLUCOSE_ISOMERASE_3"/>
    <property type="match status" value="1"/>
</dbReference>
<evidence type="ECO:0000255" key="1">
    <source>
        <dbReference type="HAMAP-Rule" id="MF_00473"/>
    </source>
</evidence>
<organism>
    <name type="scientific">Lactobacillus helveticus (strain DPC 4571)</name>
    <dbReference type="NCBI Taxonomy" id="405566"/>
    <lineage>
        <taxon>Bacteria</taxon>
        <taxon>Bacillati</taxon>
        <taxon>Bacillota</taxon>
        <taxon>Bacilli</taxon>
        <taxon>Lactobacillales</taxon>
        <taxon>Lactobacillaceae</taxon>
        <taxon>Lactobacillus</taxon>
    </lineage>
</organism>
<feature type="chain" id="PRO_1000072396" description="Glucose-6-phosphate isomerase">
    <location>
        <begin position="1"/>
        <end position="446"/>
    </location>
</feature>
<feature type="active site" description="Proton donor" evidence="1">
    <location>
        <position position="287"/>
    </location>
</feature>
<feature type="active site" evidence="1">
    <location>
        <position position="308"/>
    </location>
</feature>
<feature type="active site" evidence="1">
    <location>
        <position position="422"/>
    </location>
</feature>
<accession>A8YUI5</accession>
<protein>
    <recommendedName>
        <fullName evidence="1">Glucose-6-phosphate isomerase</fullName>
        <shortName evidence="1">GPI</shortName>
        <ecNumber evidence="1">5.3.1.9</ecNumber>
    </recommendedName>
    <alternativeName>
        <fullName evidence="1">Phosphoglucose isomerase</fullName>
        <shortName evidence="1">PGI</shortName>
    </alternativeName>
    <alternativeName>
        <fullName evidence="1">Phosphohexose isomerase</fullName>
        <shortName evidence="1">PHI</shortName>
    </alternativeName>
</protein>
<keyword id="KW-0963">Cytoplasm</keyword>
<keyword id="KW-0312">Gluconeogenesis</keyword>
<keyword id="KW-0324">Glycolysis</keyword>
<keyword id="KW-0413">Isomerase</keyword>
<proteinExistence type="inferred from homology"/>
<sequence length="446" mass="49634">MSLINFDSSKLTPFVHENELGEMQAMVNAANTELRNGTGAGSDFRGWLDLPVDYDKDEFARIKKAAKKIQGDSEVLICIGIGGSYLGAQAAIELLNSNFYGKEKTDMPIVVFCGNSLSGSYLYDLIEWLGDKDFSINVISKSGTTTEPSVAFRIFKDKLIKKYGKEEAAKRIYATTDRQKGALKTEADAEGYEEFVVPDDIGGRYSVLTAVGLLPIAAAGADIDALMKGAADARADYTDTDVHKNSPYQYAALRNILYRKGYTTEIVENYEPSLRMFGEWCKQLMGESEGKDNKGIWPSSANFTTDLHSLGQYIQEGLRNLFETVIRVENPRHDVKIPGDEKNLDQLNFLEGKSLNYVNDRAYEGVVLAHTDGGVPVMTVNIPDQTEHTLGYMIYFFELAIAISGYLNGINPFNQPGVEEYKRNMFGLLNKPGYENLHDDLTKRLK</sequence>
<comment type="function">
    <text evidence="1">Catalyzes the reversible isomerization of glucose-6-phosphate to fructose-6-phosphate.</text>
</comment>
<comment type="catalytic activity">
    <reaction evidence="1">
        <text>alpha-D-glucose 6-phosphate = beta-D-fructose 6-phosphate</text>
        <dbReference type="Rhea" id="RHEA:11816"/>
        <dbReference type="ChEBI" id="CHEBI:57634"/>
        <dbReference type="ChEBI" id="CHEBI:58225"/>
        <dbReference type="EC" id="5.3.1.9"/>
    </reaction>
</comment>
<comment type="pathway">
    <text evidence="1">Carbohydrate biosynthesis; gluconeogenesis.</text>
</comment>
<comment type="pathway">
    <text evidence="1">Carbohydrate degradation; glycolysis; D-glyceraldehyde 3-phosphate and glycerone phosphate from D-glucose: step 2/4.</text>
</comment>
<comment type="subcellular location">
    <subcellularLocation>
        <location evidence="1">Cytoplasm</location>
    </subcellularLocation>
</comment>
<comment type="similarity">
    <text evidence="1">Belongs to the GPI family.</text>
</comment>